<sequence>LKPDEELQGPGGVLSRGYFVFRPRN</sequence>
<proteinExistence type="evidence at protein level"/>
<protein>
    <recommendedName>
        <fullName>Neuromedin-U-25</fullName>
        <shortName>NmU-25</shortName>
    </recommendedName>
</protein>
<organism>
    <name type="scientific">Rana temporaria</name>
    <name type="common">European common frog</name>
    <dbReference type="NCBI Taxonomy" id="8407"/>
    <lineage>
        <taxon>Eukaryota</taxon>
        <taxon>Metazoa</taxon>
        <taxon>Chordata</taxon>
        <taxon>Craniata</taxon>
        <taxon>Vertebrata</taxon>
        <taxon>Euteleostomi</taxon>
        <taxon>Amphibia</taxon>
        <taxon>Batrachia</taxon>
        <taxon>Anura</taxon>
        <taxon>Neobatrachia</taxon>
        <taxon>Ranoidea</taxon>
        <taxon>Ranidae</taxon>
        <taxon>Rana</taxon>
        <taxon>Rana</taxon>
    </lineage>
</organism>
<reference key="1">
    <citation type="journal article" date="1989" name="J. Biol. Chem.">
        <title>The distribution, purification, and pharmacological action of an amphibian neuromedin U.</title>
        <authorList>
            <person name="Domin J."/>
            <person name="Yiangou Y.G."/>
            <person name="Spokes R.A."/>
            <person name="Aitken A."/>
            <person name="Parmar K.B."/>
            <person name="Chrysanthou B.J."/>
            <person name="Bloom S.R."/>
        </authorList>
    </citation>
    <scope>PROTEIN SEQUENCE</scope>
    <scope>AMIDATION AT ASN-25</scope>
    <source>
        <tissue>Intestine</tissue>
    </source>
</reference>
<accession>P20056</accession>
<name>NMU_RANTE</name>
<evidence type="ECO:0000269" key="1">
    <source>
    </source>
</evidence>
<evidence type="ECO:0000305" key="2"/>
<dbReference type="PIR" id="A34179">
    <property type="entry name" value="A34179"/>
</dbReference>
<dbReference type="GO" id="GO:0005576">
    <property type="term" value="C:extracellular region"/>
    <property type="evidence" value="ECO:0007669"/>
    <property type="project" value="UniProtKB-SubCell"/>
</dbReference>
<dbReference type="GO" id="GO:0005179">
    <property type="term" value="F:hormone activity"/>
    <property type="evidence" value="ECO:0007669"/>
    <property type="project" value="UniProtKB-KW"/>
</dbReference>
<dbReference type="GO" id="GO:0006940">
    <property type="term" value="P:regulation of smooth muscle contraction"/>
    <property type="evidence" value="ECO:0007669"/>
    <property type="project" value="InterPro"/>
</dbReference>
<dbReference type="InterPro" id="IPR018070">
    <property type="entry name" value="Neuromedin-U_amidation-site"/>
</dbReference>
<dbReference type="InterPro" id="IPR008200">
    <property type="entry name" value="NMU_C"/>
</dbReference>
<dbReference type="Pfam" id="PF02070">
    <property type="entry name" value="NMU"/>
    <property type="match status" value="1"/>
</dbReference>
<dbReference type="SMART" id="SM00084">
    <property type="entry name" value="NMU"/>
    <property type="match status" value="1"/>
</dbReference>
<dbReference type="PROSITE" id="PS00967">
    <property type="entry name" value="NMU"/>
    <property type="match status" value="1"/>
</dbReference>
<keyword id="KW-0027">Amidation</keyword>
<keyword id="KW-0903">Direct protein sequencing</keyword>
<keyword id="KW-0372">Hormone</keyword>
<keyword id="KW-0964">Secreted</keyword>
<feature type="peptide" id="PRO_0000044075" description="Neuromedin-U-25">
    <location>
        <begin position="1"/>
        <end position="25"/>
    </location>
</feature>
<feature type="modified residue" description="Asparagine amide" evidence="1">
    <location>
        <position position="25"/>
    </location>
</feature>
<comment type="function">
    <text>Stimulates uterine smooth muscle contraction and causes selective vasoconstriction.</text>
</comment>
<comment type="subcellular location">
    <subcellularLocation>
        <location>Secreted</location>
    </subcellularLocation>
</comment>
<comment type="similarity">
    <text evidence="2">Belongs to the NmU family.</text>
</comment>